<dbReference type="EMBL" id="CP001120">
    <property type="protein sequence ID" value="ACF67622.1"/>
    <property type="molecule type" value="Genomic_DNA"/>
</dbReference>
<dbReference type="RefSeq" id="WP_000103754.1">
    <property type="nucleotide sequence ID" value="NC_011083.1"/>
</dbReference>
<dbReference type="SMR" id="B4TFH1"/>
<dbReference type="GeneID" id="98387866"/>
<dbReference type="KEGG" id="seh:SeHA_C1310"/>
<dbReference type="HOGENOM" id="CLU_108696_5_1_6"/>
<dbReference type="UniPathway" id="UPA00094"/>
<dbReference type="Proteomes" id="UP000001866">
    <property type="component" value="Chromosome"/>
</dbReference>
<dbReference type="GO" id="GO:0005829">
    <property type="term" value="C:cytosol"/>
    <property type="evidence" value="ECO:0007669"/>
    <property type="project" value="TreeGrafter"/>
</dbReference>
<dbReference type="GO" id="GO:0016020">
    <property type="term" value="C:membrane"/>
    <property type="evidence" value="ECO:0007669"/>
    <property type="project" value="GOC"/>
</dbReference>
<dbReference type="GO" id="GO:0000035">
    <property type="term" value="F:acyl binding"/>
    <property type="evidence" value="ECO:0007669"/>
    <property type="project" value="TreeGrafter"/>
</dbReference>
<dbReference type="GO" id="GO:0000036">
    <property type="term" value="F:acyl carrier activity"/>
    <property type="evidence" value="ECO:0007669"/>
    <property type="project" value="UniProtKB-UniRule"/>
</dbReference>
<dbReference type="GO" id="GO:0009245">
    <property type="term" value="P:lipid A biosynthetic process"/>
    <property type="evidence" value="ECO:0007669"/>
    <property type="project" value="TreeGrafter"/>
</dbReference>
<dbReference type="FunFam" id="1.10.1200.10:FF:000001">
    <property type="entry name" value="Acyl carrier protein"/>
    <property type="match status" value="1"/>
</dbReference>
<dbReference type="Gene3D" id="1.10.1200.10">
    <property type="entry name" value="ACP-like"/>
    <property type="match status" value="1"/>
</dbReference>
<dbReference type="HAMAP" id="MF_01217">
    <property type="entry name" value="Acyl_carrier"/>
    <property type="match status" value="1"/>
</dbReference>
<dbReference type="InterPro" id="IPR003231">
    <property type="entry name" value="ACP"/>
</dbReference>
<dbReference type="InterPro" id="IPR036736">
    <property type="entry name" value="ACP-like_sf"/>
</dbReference>
<dbReference type="InterPro" id="IPR009081">
    <property type="entry name" value="PP-bd_ACP"/>
</dbReference>
<dbReference type="InterPro" id="IPR006162">
    <property type="entry name" value="Ppantetheine_attach_site"/>
</dbReference>
<dbReference type="NCBIfam" id="TIGR00517">
    <property type="entry name" value="acyl_carrier"/>
    <property type="match status" value="1"/>
</dbReference>
<dbReference type="NCBIfam" id="NF002148">
    <property type="entry name" value="PRK00982.1-2"/>
    <property type="match status" value="1"/>
</dbReference>
<dbReference type="NCBIfam" id="NF002149">
    <property type="entry name" value="PRK00982.1-3"/>
    <property type="match status" value="1"/>
</dbReference>
<dbReference type="NCBIfam" id="NF002150">
    <property type="entry name" value="PRK00982.1-4"/>
    <property type="match status" value="1"/>
</dbReference>
<dbReference type="NCBIfam" id="NF002151">
    <property type="entry name" value="PRK00982.1-5"/>
    <property type="match status" value="1"/>
</dbReference>
<dbReference type="PANTHER" id="PTHR20863">
    <property type="entry name" value="ACYL CARRIER PROTEIN"/>
    <property type="match status" value="1"/>
</dbReference>
<dbReference type="PANTHER" id="PTHR20863:SF76">
    <property type="entry name" value="CARRIER DOMAIN-CONTAINING PROTEIN"/>
    <property type="match status" value="1"/>
</dbReference>
<dbReference type="Pfam" id="PF00550">
    <property type="entry name" value="PP-binding"/>
    <property type="match status" value="1"/>
</dbReference>
<dbReference type="SUPFAM" id="SSF47336">
    <property type="entry name" value="ACP-like"/>
    <property type="match status" value="1"/>
</dbReference>
<dbReference type="PROSITE" id="PS50075">
    <property type="entry name" value="CARRIER"/>
    <property type="match status" value="1"/>
</dbReference>
<dbReference type="PROSITE" id="PS00012">
    <property type="entry name" value="PHOSPHOPANTETHEINE"/>
    <property type="match status" value="1"/>
</dbReference>
<protein>
    <recommendedName>
        <fullName evidence="1">Acyl carrier protein</fullName>
        <shortName evidence="1">ACP</shortName>
    </recommendedName>
</protein>
<evidence type="ECO:0000255" key="1">
    <source>
        <dbReference type="HAMAP-Rule" id="MF_01217"/>
    </source>
</evidence>
<evidence type="ECO:0000255" key="2">
    <source>
        <dbReference type="PROSITE-ProRule" id="PRU00258"/>
    </source>
</evidence>
<reference key="1">
    <citation type="journal article" date="2011" name="J. Bacteriol.">
        <title>Comparative genomics of 28 Salmonella enterica isolates: evidence for CRISPR-mediated adaptive sublineage evolution.</title>
        <authorList>
            <person name="Fricke W.F."/>
            <person name="Mammel M.K."/>
            <person name="McDermott P.F."/>
            <person name="Tartera C."/>
            <person name="White D.G."/>
            <person name="Leclerc J.E."/>
            <person name="Ravel J."/>
            <person name="Cebula T.A."/>
        </authorList>
    </citation>
    <scope>NUCLEOTIDE SEQUENCE [LARGE SCALE GENOMIC DNA]</scope>
    <source>
        <strain>SL476</strain>
    </source>
</reference>
<gene>
    <name evidence="1" type="primary">acpP</name>
    <name type="ordered locus">SeHA_C1310</name>
</gene>
<keyword id="KW-0963">Cytoplasm</keyword>
<keyword id="KW-0275">Fatty acid biosynthesis</keyword>
<keyword id="KW-0276">Fatty acid metabolism</keyword>
<keyword id="KW-0444">Lipid biosynthesis</keyword>
<keyword id="KW-0443">Lipid metabolism</keyword>
<keyword id="KW-0596">Phosphopantetheine</keyword>
<keyword id="KW-0597">Phosphoprotein</keyword>
<sequence length="78" mass="8640">MSTIEERVKKIIGEQLGVKQEEVTNNASFVEDLGADSLDTVELVMALEEEFDTEIPDEEAEKITTVQAAIDYINGHQA</sequence>
<proteinExistence type="inferred from homology"/>
<comment type="function">
    <text evidence="1">Carrier of the growing fatty acid chain in fatty acid biosynthesis.</text>
</comment>
<comment type="pathway">
    <text evidence="1">Lipid metabolism; fatty acid biosynthesis.</text>
</comment>
<comment type="subcellular location">
    <subcellularLocation>
        <location evidence="1">Cytoplasm</location>
    </subcellularLocation>
</comment>
<comment type="PTM">
    <text evidence="1">4'-phosphopantetheine is transferred from CoA to a specific serine of apo-ACP by AcpS. This modification is essential for activity because fatty acids are bound in thioester linkage to the sulfhydryl of the prosthetic group.</text>
</comment>
<comment type="similarity">
    <text evidence="1">Belongs to the acyl carrier protein (ACP) family.</text>
</comment>
<accession>B4TFH1</accession>
<name>ACP_SALHS</name>
<organism>
    <name type="scientific">Salmonella heidelberg (strain SL476)</name>
    <dbReference type="NCBI Taxonomy" id="454169"/>
    <lineage>
        <taxon>Bacteria</taxon>
        <taxon>Pseudomonadati</taxon>
        <taxon>Pseudomonadota</taxon>
        <taxon>Gammaproteobacteria</taxon>
        <taxon>Enterobacterales</taxon>
        <taxon>Enterobacteriaceae</taxon>
        <taxon>Salmonella</taxon>
    </lineage>
</organism>
<feature type="chain" id="PRO_1000139064" description="Acyl carrier protein">
    <location>
        <begin position="1"/>
        <end position="78"/>
    </location>
</feature>
<feature type="domain" description="Carrier" evidence="2">
    <location>
        <begin position="2"/>
        <end position="77"/>
    </location>
</feature>
<feature type="modified residue" description="O-(pantetheine 4'-phosphoryl)serine" evidence="2">
    <location>
        <position position="37"/>
    </location>
</feature>